<comment type="function">
    <text evidence="3">Component of the cytochrome c oxidase, the last enzyme in the mitochondrial electron transport chain which drives oxidative phosphorylation. The respiratory chain contains 3 multisubunit complexes succinate dehydrogenase (complex II, CII), ubiquinol-cytochrome c oxidoreductase (cytochrome b-c1 complex, complex III, CIII) and cytochrome c oxidase (complex IV, CIV), that cooperate to transfer electrons derived from NADH and succinate to molecular oxygen, creating an electrochemical gradient over the inner membrane that drives transmembrane transport and the ATP synthase. Cytochrome c oxidase is the component of the respiratory chain that catalyzes the reduction of oxygen to water. Electrons originating from reduced cytochrome c in the intermembrane space (IMS) are transferred via the dinuclear copper A center (CU(A)) of subunit 2 and heme A of subunit 1 to the active site in subunit 1, a binuclear center (BNC) formed by heme A3 and copper B (CU(B)). The BNC reduces molecular oxygen to 2 water molecules using 4 electrons from cytochrome c in the IMS and 4 protons from the mitochondrial matrix.</text>
</comment>
<comment type="catalytic activity">
    <reaction evidence="3">
        <text>4 Fe(II)-[cytochrome c] + O2 + 8 H(+)(in) = 4 Fe(III)-[cytochrome c] + 2 H2O + 4 H(+)(out)</text>
        <dbReference type="Rhea" id="RHEA:11436"/>
        <dbReference type="Rhea" id="RHEA-COMP:10350"/>
        <dbReference type="Rhea" id="RHEA-COMP:14399"/>
        <dbReference type="ChEBI" id="CHEBI:15377"/>
        <dbReference type="ChEBI" id="CHEBI:15378"/>
        <dbReference type="ChEBI" id="CHEBI:15379"/>
        <dbReference type="ChEBI" id="CHEBI:29033"/>
        <dbReference type="ChEBI" id="CHEBI:29034"/>
        <dbReference type="EC" id="7.1.1.9"/>
    </reaction>
    <physiologicalReaction direction="left-to-right" evidence="3">
        <dbReference type="Rhea" id="RHEA:11437"/>
    </physiologicalReaction>
</comment>
<comment type="cofactor">
    <cofactor evidence="4">
        <name>Cu cation</name>
        <dbReference type="ChEBI" id="CHEBI:23378"/>
    </cofactor>
    <text evidence="4">Binds a dinuclear copper A center per subunit.</text>
</comment>
<comment type="subunit">
    <text evidence="1 4">Component of the cytochrome c oxidase (complex IV, CIV), a multisubunit enzyme composed of 14 subunits. The complex is composed of a catalytic core of 3 subunits MT-CO1, MT-CO2 and MT-CO3, encoded in the mitochondrial DNA, and 11 supernumerary subunits COX4I, COX5A, COX5B, COX6A, COX6B, COX6C, COX7A, COX7B, COX7C, COX8 and NDUFA4, which are encoded in the nuclear genome. The complex exists as a monomer or a dimer and forms supercomplexes (SCs) in the inner mitochondrial membrane with NADH-ubiquinone oxidoreductase (complex I, CI) and ubiquinol-cytochrome c oxidoreductase (cytochrome b-c1 complex, complex III, CIII), resulting in different assemblies (supercomplex SCI(1)III(2)IV(1) and megacomplex MCI(2)III(2)IV(2)) (By similarity). Found in a complex with TMEM177, COA6, COX18, COX20, SCO1 and SCO2. Interacts with TMEM177 in a COX20-dependent manner. Interacts with COX20. Interacts with COX16 (By similarity).</text>
</comment>
<comment type="subcellular location">
    <subcellularLocation>
        <location evidence="4">Mitochondrion inner membrane</location>
        <topology evidence="4">Multi-pass membrane protein</topology>
    </subcellularLocation>
</comment>
<comment type="similarity">
    <text evidence="5">Belongs to the cytochrome c oxidase subunit 2 family.</text>
</comment>
<gene>
    <name type="primary">MT-CO2</name>
    <name type="synonym">COII</name>
    <name type="synonym">COXII</name>
    <name type="synonym">MTCO2</name>
</gene>
<evidence type="ECO:0000250" key="1">
    <source>
        <dbReference type="UniProtKB" id="P00403"/>
    </source>
</evidence>
<evidence type="ECO:0000250" key="2">
    <source>
        <dbReference type="UniProtKB" id="P00406"/>
    </source>
</evidence>
<evidence type="ECO:0000250" key="3">
    <source>
        <dbReference type="UniProtKB" id="P00410"/>
    </source>
</evidence>
<evidence type="ECO:0000250" key="4">
    <source>
        <dbReference type="UniProtKB" id="P68530"/>
    </source>
</evidence>
<evidence type="ECO:0000305" key="5"/>
<proteinExistence type="inferred from homology"/>
<geneLocation type="mitochondrion"/>
<accession>P50675</accession>
<keyword id="KW-0186">Copper</keyword>
<keyword id="KW-0249">Electron transport</keyword>
<keyword id="KW-0460">Magnesium</keyword>
<keyword id="KW-0472">Membrane</keyword>
<keyword id="KW-0479">Metal-binding</keyword>
<keyword id="KW-0496">Mitochondrion</keyword>
<keyword id="KW-0999">Mitochondrion inner membrane</keyword>
<keyword id="KW-0597">Phosphoprotein</keyword>
<keyword id="KW-0679">Respiratory chain</keyword>
<keyword id="KW-1278">Translocase</keyword>
<keyword id="KW-0812">Transmembrane</keyword>
<keyword id="KW-1133">Transmembrane helix</keyword>
<keyword id="KW-0813">Transport</keyword>
<organism>
    <name type="scientific">Syncerus caffer</name>
    <name type="common">African buffalo</name>
    <dbReference type="NCBI Taxonomy" id="9970"/>
    <lineage>
        <taxon>Eukaryota</taxon>
        <taxon>Metazoa</taxon>
        <taxon>Chordata</taxon>
        <taxon>Craniata</taxon>
        <taxon>Vertebrata</taxon>
        <taxon>Euteleostomi</taxon>
        <taxon>Mammalia</taxon>
        <taxon>Eutheria</taxon>
        <taxon>Laurasiatheria</taxon>
        <taxon>Artiodactyla</taxon>
        <taxon>Ruminantia</taxon>
        <taxon>Pecora</taxon>
        <taxon>Bovidae</taxon>
        <taxon>Bovinae</taxon>
        <taxon>Syncerus</taxon>
    </lineage>
</organism>
<protein>
    <recommendedName>
        <fullName>Cytochrome c oxidase subunit 2</fullName>
        <ecNumber>7.1.1.9</ecNumber>
    </recommendedName>
    <alternativeName>
        <fullName>Cytochrome c oxidase polypeptide II</fullName>
    </alternativeName>
</protein>
<reference key="1">
    <citation type="journal article" date="1995" name="J. Mol. Evol.">
        <title>Mammalian mitochondrial DNA evolution: a comparison of the cytochrome b and cytochrome c oxidase II genes.</title>
        <authorList>
            <person name="Honeycutt R.L."/>
            <person name="Nedbal M.A."/>
            <person name="Adkins R.M."/>
            <person name="Janecek L.L."/>
        </authorList>
    </citation>
    <scope>NUCLEOTIDE SEQUENCE [GENOMIC DNA]</scope>
    <source>
        <strain>Nanus</strain>
    </source>
</reference>
<name>COX2_SYNCA</name>
<sequence>MAYPMQLGFQDATSPIMEELLHFHDHTLMIVFLISSLVLYIISLMLTTKLTHTSTMDAQEVETIWTILPAIILILIALPSLRILYMMDEINNPSLTVKTMGHQWYWSYEYTDYEDLSFDSYMVPTSELKPGELRLLEVDNRVVLPMEMTIRMLVSSEDVLHSWAVPSLGLKTDAIPGRLNQTTLMSTRPGLYYGQCSEICGSNHSFMPIVLEMVPLKYFEKWSASML</sequence>
<dbReference type="EC" id="7.1.1.9"/>
<dbReference type="EMBL" id="U18826">
    <property type="protein sequence ID" value="AAA75620.1"/>
    <property type="molecule type" value="Genomic_DNA"/>
</dbReference>
<dbReference type="EMBL" id="U18825">
    <property type="protein sequence ID" value="AAA75619.1"/>
    <property type="molecule type" value="Genomic_DNA"/>
</dbReference>
<dbReference type="SMR" id="P50675"/>
<dbReference type="CTD" id="4513"/>
<dbReference type="GO" id="GO:0005743">
    <property type="term" value="C:mitochondrial inner membrane"/>
    <property type="evidence" value="ECO:0007669"/>
    <property type="project" value="UniProtKB-SubCell"/>
</dbReference>
<dbReference type="GO" id="GO:0045277">
    <property type="term" value="C:respiratory chain complex IV"/>
    <property type="evidence" value="ECO:0000250"/>
    <property type="project" value="UniProtKB"/>
</dbReference>
<dbReference type="GO" id="GO:0005507">
    <property type="term" value="F:copper ion binding"/>
    <property type="evidence" value="ECO:0007669"/>
    <property type="project" value="InterPro"/>
</dbReference>
<dbReference type="GO" id="GO:0004129">
    <property type="term" value="F:cytochrome-c oxidase activity"/>
    <property type="evidence" value="ECO:0007669"/>
    <property type="project" value="UniProtKB-EC"/>
</dbReference>
<dbReference type="GO" id="GO:0042773">
    <property type="term" value="P:ATP synthesis coupled electron transport"/>
    <property type="evidence" value="ECO:0007669"/>
    <property type="project" value="TreeGrafter"/>
</dbReference>
<dbReference type="CDD" id="cd13912">
    <property type="entry name" value="CcO_II_C"/>
    <property type="match status" value="1"/>
</dbReference>
<dbReference type="FunFam" id="1.10.287.90:FF:000001">
    <property type="entry name" value="Cytochrome c oxidase subunit 2"/>
    <property type="match status" value="1"/>
</dbReference>
<dbReference type="FunFam" id="2.60.40.420:FF:000001">
    <property type="entry name" value="Cytochrome c oxidase subunit 2"/>
    <property type="match status" value="1"/>
</dbReference>
<dbReference type="Gene3D" id="1.10.287.90">
    <property type="match status" value="1"/>
</dbReference>
<dbReference type="Gene3D" id="2.60.40.420">
    <property type="entry name" value="Cupredoxins - blue copper proteins"/>
    <property type="match status" value="1"/>
</dbReference>
<dbReference type="InterPro" id="IPR045187">
    <property type="entry name" value="CcO_II"/>
</dbReference>
<dbReference type="InterPro" id="IPR002429">
    <property type="entry name" value="CcO_II-like_C"/>
</dbReference>
<dbReference type="InterPro" id="IPR034210">
    <property type="entry name" value="CcO_II_C"/>
</dbReference>
<dbReference type="InterPro" id="IPR001505">
    <property type="entry name" value="Copper_CuA"/>
</dbReference>
<dbReference type="InterPro" id="IPR008972">
    <property type="entry name" value="Cupredoxin"/>
</dbReference>
<dbReference type="InterPro" id="IPR014222">
    <property type="entry name" value="Cyt_c_oxidase_su2"/>
</dbReference>
<dbReference type="InterPro" id="IPR011759">
    <property type="entry name" value="Cyt_c_oxidase_su2_TM_dom"/>
</dbReference>
<dbReference type="InterPro" id="IPR036257">
    <property type="entry name" value="Cyt_c_oxidase_su2_TM_sf"/>
</dbReference>
<dbReference type="NCBIfam" id="TIGR02866">
    <property type="entry name" value="CoxB"/>
    <property type="match status" value="1"/>
</dbReference>
<dbReference type="PANTHER" id="PTHR22888:SF9">
    <property type="entry name" value="CYTOCHROME C OXIDASE SUBUNIT 2"/>
    <property type="match status" value="1"/>
</dbReference>
<dbReference type="PANTHER" id="PTHR22888">
    <property type="entry name" value="CYTOCHROME C OXIDASE, SUBUNIT II"/>
    <property type="match status" value="1"/>
</dbReference>
<dbReference type="Pfam" id="PF00116">
    <property type="entry name" value="COX2"/>
    <property type="match status" value="1"/>
</dbReference>
<dbReference type="Pfam" id="PF02790">
    <property type="entry name" value="COX2_TM"/>
    <property type="match status" value="1"/>
</dbReference>
<dbReference type="PRINTS" id="PR01166">
    <property type="entry name" value="CYCOXIDASEII"/>
</dbReference>
<dbReference type="SUPFAM" id="SSF49503">
    <property type="entry name" value="Cupredoxins"/>
    <property type="match status" value="1"/>
</dbReference>
<dbReference type="SUPFAM" id="SSF81464">
    <property type="entry name" value="Cytochrome c oxidase subunit II-like, transmembrane region"/>
    <property type="match status" value="1"/>
</dbReference>
<dbReference type="PROSITE" id="PS00078">
    <property type="entry name" value="COX2"/>
    <property type="match status" value="1"/>
</dbReference>
<dbReference type="PROSITE" id="PS50857">
    <property type="entry name" value="COX2_CUA"/>
    <property type="match status" value="1"/>
</dbReference>
<dbReference type="PROSITE" id="PS50999">
    <property type="entry name" value="COX2_TM"/>
    <property type="match status" value="1"/>
</dbReference>
<feature type="chain" id="PRO_0000183699" description="Cytochrome c oxidase subunit 2">
    <location>
        <begin position="1"/>
        <end position="227"/>
    </location>
</feature>
<feature type="topological domain" description="Mitochondrial intermembrane" evidence="4">
    <location>
        <begin position="1"/>
        <end position="14"/>
    </location>
</feature>
<feature type="transmembrane region" description="Helical; Name=I" evidence="4">
    <location>
        <begin position="15"/>
        <end position="45"/>
    </location>
</feature>
<feature type="topological domain" description="Mitochondrial matrix" evidence="4">
    <location>
        <begin position="46"/>
        <end position="59"/>
    </location>
</feature>
<feature type="transmembrane region" description="Helical; Name=II" evidence="4">
    <location>
        <begin position="60"/>
        <end position="87"/>
    </location>
</feature>
<feature type="topological domain" description="Mitochondrial intermembrane" evidence="4">
    <location>
        <begin position="88"/>
        <end position="227"/>
    </location>
</feature>
<feature type="binding site" evidence="4">
    <location>
        <position position="161"/>
    </location>
    <ligand>
        <name>Cu cation</name>
        <dbReference type="ChEBI" id="CHEBI:23378"/>
        <label>A1</label>
    </ligand>
</feature>
<feature type="binding site" evidence="4">
    <location>
        <position position="196"/>
    </location>
    <ligand>
        <name>Cu cation</name>
        <dbReference type="ChEBI" id="CHEBI:23378"/>
        <label>A1</label>
    </ligand>
</feature>
<feature type="binding site" evidence="4">
    <location>
        <position position="196"/>
    </location>
    <ligand>
        <name>Cu cation</name>
        <dbReference type="ChEBI" id="CHEBI:23378"/>
        <label>A2</label>
    </ligand>
</feature>
<feature type="binding site" evidence="4">
    <location>
        <position position="198"/>
    </location>
    <ligand>
        <name>Cu cation</name>
        <dbReference type="ChEBI" id="CHEBI:23378"/>
        <label>A2</label>
    </ligand>
</feature>
<feature type="binding site" evidence="4">
    <location>
        <position position="198"/>
    </location>
    <ligand>
        <name>Mg(2+)</name>
        <dbReference type="ChEBI" id="CHEBI:18420"/>
        <note>ligand shared with MT-CO1</note>
    </ligand>
</feature>
<feature type="binding site" evidence="4">
    <location>
        <position position="200"/>
    </location>
    <ligand>
        <name>Cu cation</name>
        <dbReference type="ChEBI" id="CHEBI:23378"/>
        <label>A1</label>
    </ligand>
</feature>
<feature type="binding site" evidence="4">
    <location>
        <position position="200"/>
    </location>
    <ligand>
        <name>Cu cation</name>
        <dbReference type="ChEBI" id="CHEBI:23378"/>
        <label>A2</label>
    </ligand>
</feature>
<feature type="binding site" evidence="4">
    <location>
        <position position="204"/>
    </location>
    <ligand>
        <name>Cu cation</name>
        <dbReference type="ChEBI" id="CHEBI:23378"/>
        <label>A2</label>
    </ligand>
</feature>
<feature type="binding site" evidence="4">
    <location>
        <position position="207"/>
    </location>
    <ligand>
        <name>Cu cation</name>
        <dbReference type="ChEBI" id="CHEBI:23378"/>
        <label>A1</label>
    </ligand>
</feature>
<feature type="modified residue" description="Phosphotyrosine" evidence="2">
    <location>
        <position position="218"/>
    </location>
</feature>